<name>ENGB_HELHP</name>
<sequence>MVQVIESRFMSSASHLDNAPPPNASEIVFLGRSNVGKSTLINTLLNKPLAKSSSTPGKTQLINFFASVWVWHNQRLPLTFIDLPGFGYAKVSKTIKKEWERHLLNFLFMRQSIKLFLHLVDARHTDLAIDTSVATMLEQICRGDQCILRIYTKADKLNQSALNALYKRVYIQKNKVQGVDTDDTHTQSLLFSAISKNHRKMVSLTHLREEIVKYTLGLENGI</sequence>
<keyword id="KW-0131">Cell cycle</keyword>
<keyword id="KW-0132">Cell division</keyword>
<keyword id="KW-0342">GTP-binding</keyword>
<keyword id="KW-0460">Magnesium</keyword>
<keyword id="KW-0479">Metal-binding</keyword>
<keyword id="KW-0547">Nucleotide-binding</keyword>
<keyword id="KW-1185">Reference proteome</keyword>
<keyword id="KW-0717">Septation</keyword>
<proteinExistence type="inferred from homology"/>
<evidence type="ECO:0000255" key="1">
    <source>
        <dbReference type="HAMAP-Rule" id="MF_00321"/>
    </source>
</evidence>
<reference key="1">
    <citation type="journal article" date="2003" name="Proc. Natl. Acad. Sci. U.S.A.">
        <title>The complete genome sequence of the carcinogenic bacterium Helicobacter hepaticus.</title>
        <authorList>
            <person name="Suerbaum S."/>
            <person name="Josenhans C."/>
            <person name="Sterzenbach T."/>
            <person name="Drescher B."/>
            <person name="Brandt P."/>
            <person name="Bell M."/>
            <person name="Droege M."/>
            <person name="Fartmann B."/>
            <person name="Fischer H.-P."/>
            <person name="Ge Z."/>
            <person name="Hoerster A."/>
            <person name="Holland R."/>
            <person name="Klein K."/>
            <person name="Koenig J."/>
            <person name="Macko L."/>
            <person name="Mendz G.L."/>
            <person name="Nyakatura G."/>
            <person name="Schauer D.B."/>
            <person name="Shen Z."/>
            <person name="Weber J."/>
            <person name="Frosch M."/>
            <person name="Fox J.G."/>
        </authorList>
    </citation>
    <scope>NUCLEOTIDE SEQUENCE [LARGE SCALE GENOMIC DNA]</scope>
    <source>
        <strain>ATCC 51449 / 3B1</strain>
    </source>
</reference>
<gene>
    <name evidence="1" type="primary">engB</name>
    <name type="ordered locus">HH_1329</name>
</gene>
<feature type="chain" id="PRO_0000266874" description="Probable GTP-binding protein EngB">
    <location>
        <begin position="1"/>
        <end position="222"/>
    </location>
</feature>
<feature type="domain" description="EngB-type G" evidence="1">
    <location>
        <begin position="23"/>
        <end position="217"/>
    </location>
</feature>
<feature type="binding site" evidence="1">
    <location>
        <begin position="31"/>
        <end position="38"/>
    </location>
    <ligand>
        <name>GTP</name>
        <dbReference type="ChEBI" id="CHEBI:37565"/>
    </ligand>
</feature>
<feature type="binding site" evidence="1">
    <location>
        <position position="38"/>
    </location>
    <ligand>
        <name>Mg(2+)</name>
        <dbReference type="ChEBI" id="CHEBI:18420"/>
    </ligand>
</feature>
<feature type="binding site" evidence="1">
    <location>
        <begin position="57"/>
        <end position="61"/>
    </location>
    <ligand>
        <name>GTP</name>
        <dbReference type="ChEBI" id="CHEBI:37565"/>
    </ligand>
</feature>
<feature type="binding site" evidence="1">
    <location>
        <position position="59"/>
    </location>
    <ligand>
        <name>Mg(2+)</name>
        <dbReference type="ChEBI" id="CHEBI:18420"/>
    </ligand>
</feature>
<feature type="binding site" evidence="1">
    <location>
        <begin position="82"/>
        <end position="85"/>
    </location>
    <ligand>
        <name>GTP</name>
        <dbReference type="ChEBI" id="CHEBI:37565"/>
    </ligand>
</feature>
<feature type="binding site" evidence="1">
    <location>
        <begin position="152"/>
        <end position="155"/>
    </location>
    <ligand>
        <name>GTP</name>
        <dbReference type="ChEBI" id="CHEBI:37565"/>
    </ligand>
</feature>
<feature type="binding site" evidence="1">
    <location>
        <begin position="191"/>
        <end position="193"/>
    </location>
    <ligand>
        <name>GTP</name>
        <dbReference type="ChEBI" id="CHEBI:37565"/>
    </ligand>
</feature>
<organism>
    <name type="scientific">Helicobacter hepaticus (strain ATCC 51449 / 3B1)</name>
    <dbReference type="NCBI Taxonomy" id="235279"/>
    <lineage>
        <taxon>Bacteria</taxon>
        <taxon>Pseudomonadati</taxon>
        <taxon>Campylobacterota</taxon>
        <taxon>Epsilonproteobacteria</taxon>
        <taxon>Campylobacterales</taxon>
        <taxon>Helicobacteraceae</taxon>
        <taxon>Helicobacter</taxon>
    </lineage>
</organism>
<dbReference type="EMBL" id="AE017125">
    <property type="protein sequence ID" value="AAP77926.1"/>
    <property type="molecule type" value="Genomic_DNA"/>
</dbReference>
<dbReference type="RefSeq" id="WP_011116169.1">
    <property type="nucleotide sequence ID" value="NC_004917.1"/>
</dbReference>
<dbReference type="SMR" id="Q7VGJ2"/>
<dbReference type="STRING" id="235279.HH_1329"/>
<dbReference type="KEGG" id="hhe:HH_1329"/>
<dbReference type="eggNOG" id="COG0218">
    <property type="taxonomic scope" value="Bacteria"/>
</dbReference>
<dbReference type="HOGENOM" id="CLU_033732_3_2_7"/>
<dbReference type="OrthoDB" id="9804921at2"/>
<dbReference type="Proteomes" id="UP000002495">
    <property type="component" value="Chromosome"/>
</dbReference>
<dbReference type="GO" id="GO:0005829">
    <property type="term" value="C:cytosol"/>
    <property type="evidence" value="ECO:0007669"/>
    <property type="project" value="TreeGrafter"/>
</dbReference>
<dbReference type="GO" id="GO:0005525">
    <property type="term" value="F:GTP binding"/>
    <property type="evidence" value="ECO:0007669"/>
    <property type="project" value="UniProtKB-UniRule"/>
</dbReference>
<dbReference type="GO" id="GO:0046872">
    <property type="term" value="F:metal ion binding"/>
    <property type="evidence" value="ECO:0007669"/>
    <property type="project" value="UniProtKB-KW"/>
</dbReference>
<dbReference type="GO" id="GO:0000917">
    <property type="term" value="P:division septum assembly"/>
    <property type="evidence" value="ECO:0007669"/>
    <property type="project" value="UniProtKB-KW"/>
</dbReference>
<dbReference type="CDD" id="cd01876">
    <property type="entry name" value="YihA_EngB"/>
    <property type="match status" value="1"/>
</dbReference>
<dbReference type="Gene3D" id="3.40.50.300">
    <property type="entry name" value="P-loop containing nucleotide triphosphate hydrolases"/>
    <property type="match status" value="1"/>
</dbReference>
<dbReference type="HAMAP" id="MF_00321">
    <property type="entry name" value="GTPase_EngB"/>
    <property type="match status" value="1"/>
</dbReference>
<dbReference type="InterPro" id="IPR030393">
    <property type="entry name" value="G_ENGB_dom"/>
</dbReference>
<dbReference type="InterPro" id="IPR006073">
    <property type="entry name" value="GTP-bd"/>
</dbReference>
<dbReference type="InterPro" id="IPR019987">
    <property type="entry name" value="GTP-bd_ribosome_bio_YsxC"/>
</dbReference>
<dbReference type="InterPro" id="IPR027417">
    <property type="entry name" value="P-loop_NTPase"/>
</dbReference>
<dbReference type="NCBIfam" id="TIGR03598">
    <property type="entry name" value="GTPase_YsxC"/>
    <property type="match status" value="1"/>
</dbReference>
<dbReference type="PANTHER" id="PTHR11649:SF13">
    <property type="entry name" value="ENGB-TYPE G DOMAIN-CONTAINING PROTEIN"/>
    <property type="match status" value="1"/>
</dbReference>
<dbReference type="PANTHER" id="PTHR11649">
    <property type="entry name" value="MSS1/TRME-RELATED GTP-BINDING PROTEIN"/>
    <property type="match status" value="1"/>
</dbReference>
<dbReference type="Pfam" id="PF01926">
    <property type="entry name" value="MMR_HSR1"/>
    <property type="match status" value="1"/>
</dbReference>
<dbReference type="SUPFAM" id="SSF52540">
    <property type="entry name" value="P-loop containing nucleoside triphosphate hydrolases"/>
    <property type="match status" value="1"/>
</dbReference>
<dbReference type="PROSITE" id="PS51706">
    <property type="entry name" value="G_ENGB"/>
    <property type="match status" value="1"/>
</dbReference>
<protein>
    <recommendedName>
        <fullName evidence="1">Probable GTP-binding protein EngB</fullName>
    </recommendedName>
</protein>
<comment type="function">
    <text evidence="1">Necessary for normal cell division and for the maintenance of normal septation.</text>
</comment>
<comment type="cofactor">
    <cofactor evidence="1">
        <name>Mg(2+)</name>
        <dbReference type="ChEBI" id="CHEBI:18420"/>
    </cofactor>
</comment>
<comment type="similarity">
    <text evidence="1">Belongs to the TRAFAC class TrmE-Era-EngA-EngB-Septin-like GTPase superfamily. EngB GTPase family.</text>
</comment>
<accession>Q7VGJ2</accession>